<comment type="function">
    <text evidence="1">One of the proteins required for the normal export of preproteins out of the cell cytoplasm. It is a molecular chaperone that binds to a subset of precursor proteins, maintaining them in a translocation-competent state. It also specifically binds to its receptor SecA.</text>
</comment>
<comment type="subunit">
    <text evidence="1">Homotetramer, a dimer of dimers. One homotetramer interacts with 1 SecA dimer.</text>
</comment>
<comment type="subcellular location">
    <subcellularLocation>
        <location evidence="1">Cytoplasm</location>
    </subcellularLocation>
</comment>
<comment type="similarity">
    <text evidence="1">Belongs to the SecB family.</text>
</comment>
<protein>
    <recommendedName>
        <fullName evidence="1">Protein-export protein SecB</fullName>
    </recommendedName>
</protein>
<gene>
    <name evidence="1" type="primary">secB</name>
    <name type="ordered locus">PLES_55181</name>
</gene>
<keyword id="KW-0143">Chaperone</keyword>
<keyword id="KW-0963">Cytoplasm</keyword>
<keyword id="KW-0653">Protein transport</keyword>
<keyword id="KW-0811">Translocation</keyword>
<keyword id="KW-0813">Transport</keyword>
<accession>B7V3M1</accession>
<dbReference type="EMBL" id="FM209186">
    <property type="protein sequence ID" value="CAW30272.1"/>
    <property type="molecule type" value="Genomic_DNA"/>
</dbReference>
<dbReference type="RefSeq" id="WP_003096050.1">
    <property type="nucleotide sequence ID" value="NC_011770.1"/>
</dbReference>
<dbReference type="SMR" id="B7V3M1"/>
<dbReference type="GeneID" id="77223656"/>
<dbReference type="KEGG" id="pag:PLES_55181"/>
<dbReference type="HOGENOM" id="CLU_111574_1_0_6"/>
<dbReference type="GO" id="GO:0005737">
    <property type="term" value="C:cytoplasm"/>
    <property type="evidence" value="ECO:0007669"/>
    <property type="project" value="UniProtKB-SubCell"/>
</dbReference>
<dbReference type="GO" id="GO:0051082">
    <property type="term" value="F:unfolded protein binding"/>
    <property type="evidence" value="ECO:0007669"/>
    <property type="project" value="InterPro"/>
</dbReference>
<dbReference type="GO" id="GO:0006457">
    <property type="term" value="P:protein folding"/>
    <property type="evidence" value="ECO:0007669"/>
    <property type="project" value="UniProtKB-UniRule"/>
</dbReference>
<dbReference type="GO" id="GO:0051262">
    <property type="term" value="P:protein tetramerization"/>
    <property type="evidence" value="ECO:0007669"/>
    <property type="project" value="InterPro"/>
</dbReference>
<dbReference type="GO" id="GO:0015031">
    <property type="term" value="P:protein transport"/>
    <property type="evidence" value="ECO:0007669"/>
    <property type="project" value="UniProtKB-UniRule"/>
</dbReference>
<dbReference type="Gene3D" id="3.10.420.10">
    <property type="entry name" value="SecB-like"/>
    <property type="match status" value="1"/>
</dbReference>
<dbReference type="HAMAP" id="MF_00821">
    <property type="entry name" value="SecB"/>
    <property type="match status" value="1"/>
</dbReference>
<dbReference type="InterPro" id="IPR003708">
    <property type="entry name" value="SecB"/>
</dbReference>
<dbReference type="InterPro" id="IPR035958">
    <property type="entry name" value="SecB-like_sf"/>
</dbReference>
<dbReference type="NCBIfam" id="NF004393">
    <property type="entry name" value="PRK05751.1-4"/>
    <property type="match status" value="1"/>
</dbReference>
<dbReference type="NCBIfam" id="TIGR00809">
    <property type="entry name" value="secB"/>
    <property type="match status" value="1"/>
</dbReference>
<dbReference type="PANTHER" id="PTHR36918">
    <property type="match status" value="1"/>
</dbReference>
<dbReference type="PANTHER" id="PTHR36918:SF1">
    <property type="entry name" value="PROTEIN-EXPORT PROTEIN SECB"/>
    <property type="match status" value="1"/>
</dbReference>
<dbReference type="Pfam" id="PF02556">
    <property type="entry name" value="SecB"/>
    <property type="match status" value="1"/>
</dbReference>
<dbReference type="PRINTS" id="PR01594">
    <property type="entry name" value="SECBCHAPRONE"/>
</dbReference>
<dbReference type="SUPFAM" id="SSF54611">
    <property type="entry name" value="SecB-like"/>
    <property type="match status" value="1"/>
</dbReference>
<evidence type="ECO:0000255" key="1">
    <source>
        <dbReference type="HAMAP-Rule" id="MF_00821"/>
    </source>
</evidence>
<sequence length="163" mass="18146">MTEQATNGAADEQQPQFSLQRIYLRDLSFESPKSPEIFRQEWNPSISLDLNTRQKQLDGDFYEVVLTVSVTVKNGEDTTAFIAEVQQAGIFLIKNLDPSSMSHTLGAFCPNILFPYAREALDNLVVRGSFPALMLSPVNFDALYAQEIARMQASGEIPTPSVQ</sequence>
<proteinExistence type="inferred from homology"/>
<feature type="chain" id="PRO_1000195332" description="Protein-export protein SecB">
    <location>
        <begin position="1"/>
        <end position="163"/>
    </location>
</feature>
<name>SECB_PSEA8</name>
<reference key="1">
    <citation type="journal article" date="2009" name="Genome Res.">
        <title>Newly introduced genomic prophage islands are critical determinants of in vivo competitiveness in the Liverpool epidemic strain of Pseudomonas aeruginosa.</title>
        <authorList>
            <person name="Winstanley C."/>
            <person name="Langille M.G.I."/>
            <person name="Fothergill J.L."/>
            <person name="Kukavica-Ibrulj I."/>
            <person name="Paradis-Bleau C."/>
            <person name="Sanschagrin F."/>
            <person name="Thomson N.R."/>
            <person name="Winsor G.L."/>
            <person name="Quail M.A."/>
            <person name="Lennard N."/>
            <person name="Bignell A."/>
            <person name="Clarke L."/>
            <person name="Seeger K."/>
            <person name="Saunders D."/>
            <person name="Harris D."/>
            <person name="Parkhill J."/>
            <person name="Hancock R.E.W."/>
            <person name="Brinkman F.S.L."/>
            <person name="Levesque R.C."/>
        </authorList>
    </citation>
    <scope>NUCLEOTIDE SEQUENCE [LARGE SCALE GENOMIC DNA]</scope>
    <source>
        <strain>LESB58</strain>
    </source>
</reference>
<organism>
    <name type="scientific">Pseudomonas aeruginosa (strain LESB58)</name>
    <dbReference type="NCBI Taxonomy" id="557722"/>
    <lineage>
        <taxon>Bacteria</taxon>
        <taxon>Pseudomonadati</taxon>
        <taxon>Pseudomonadota</taxon>
        <taxon>Gammaproteobacteria</taxon>
        <taxon>Pseudomonadales</taxon>
        <taxon>Pseudomonadaceae</taxon>
        <taxon>Pseudomonas</taxon>
    </lineage>
</organism>